<keyword id="KW-0007">Acetylation</keyword>
<keyword id="KW-0025">Alternative splicing</keyword>
<keyword id="KW-0067">ATP-binding</keyword>
<keyword id="KW-0112">Calmodulin-binding</keyword>
<keyword id="KW-1003">Cell membrane</keyword>
<keyword id="KW-0418">Kinase</keyword>
<keyword id="KW-0472">Membrane</keyword>
<keyword id="KW-0547">Nucleotide-binding</keyword>
<keyword id="KW-0597">Phosphoprotein</keyword>
<keyword id="KW-1185">Reference proteome</keyword>
<keyword id="KW-0703">Sarcoplasmic reticulum</keyword>
<keyword id="KW-0723">Serine/threonine-protein kinase</keyword>
<keyword id="KW-0808">Transferase</keyword>
<gene>
    <name type="primary">CAMK2D</name>
</gene>
<feature type="initiator methionine" description="Removed" evidence="2">
    <location>
        <position position="1"/>
    </location>
</feature>
<feature type="chain" id="PRO_0000277819" description="Calcium/calmodulin-dependent protein kinase type II subunit delta">
    <location>
        <begin position="2"/>
        <end position="533"/>
    </location>
</feature>
<feature type="domain" description="Protein kinase" evidence="4">
    <location>
        <begin position="14"/>
        <end position="272"/>
    </location>
</feature>
<feature type="region of interest" description="Autoinhibitory domain" evidence="1">
    <location>
        <begin position="283"/>
        <end position="292"/>
    </location>
</feature>
<feature type="region of interest" description="Calmodulin-binding" evidence="1">
    <location>
        <begin position="291"/>
        <end position="301"/>
    </location>
</feature>
<feature type="region of interest" description="Disordered" evidence="6">
    <location>
        <begin position="337"/>
        <end position="375"/>
    </location>
</feature>
<feature type="active site" description="Proton acceptor" evidence="4 5">
    <location>
        <position position="136"/>
    </location>
</feature>
<feature type="binding site" evidence="4">
    <location>
        <begin position="20"/>
        <end position="28"/>
    </location>
    <ligand>
        <name>ATP</name>
        <dbReference type="ChEBI" id="CHEBI:30616"/>
    </ligand>
</feature>
<feature type="binding site" evidence="4">
    <location>
        <position position="43"/>
    </location>
    <ligand>
        <name>ATP</name>
        <dbReference type="ChEBI" id="CHEBI:30616"/>
    </ligand>
</feature>
<feature type="modified residue" description="N-acetylalanine" evidence="2">
    <location>
        <position position="2"/>
    </location>
</feature>
<feature type="modified residue" description="Phosphothreonine; by autocatalysis" evidence="2">
    <location>
        <position position="287"/>
    </location>
</feature>
<feature type="modified residue" description="Phosphothreonine; by autocatalysis" evidence="1">
    <location>
        <position position="306"/>
    </location>
</feature>
<feature type="modified residue" description="Phosphothreonine; by autocatalysis" evidence="1">
    <location>
        <position position="307"/>
    </location>
</feature>
<feature type="modified residue" description="Phosphoserine" evidence="2">
    <location>
        <position position="315"/>
    </location>
</feature>
<feature type="modified residue" description="N6-acetyllysine" evidence="3">
    <location>
        <position position="318"/>
    </location>
</feature>
<feature type="modified residue" description="Phosphoserine" evidence="2">
    <location>
        <position position="319"/>
    </location>
</feature>
<feature type="modified residue" description="Phosphoserine" evidence="2">
    <location>
        <position position="364"/>
    </location>
</feature>
<feature type="modified residue" description="Phosphothreonine" evidence="2">
    <location>
        <position position="365"/>
    </location>
</feature>
<feature type="modified residue" description="Phosphoserine" evidence="3">
    <location>
        <position position="367"/>
    </location>
</feature>
<feature type="modified residue" description="Phosphothreonine" evidence="3">
    <location>
        <position position="370"/>
    </location>
</feature>
<feature type="modified residue" description="Phosphothreonine" evidence="2">
    <location>
        <position position="371"/>
    </location>
</feature>
<feature type="modified residue" description="Phosphoserine" evidence="2">
    <location>
        <position position="438"/>
    </location>
</feature>
<feature type="modified residue" description="Phosphoserine" evidence="2">
    <location>
        <position position="524"/>
    </location>
</feature>
<feature type="modified residue" description="Phosphoserine" evidence="3">
    <location>
        <position position="528"/>
    </location>
</feature>
<feature type="splice variant" id="VSP_023104" description="In isoform 5 and isoform 6." evidence="8">
    <location>
        <position position="316"/>
    </location>
</feature>
<feature type="splice variant" id="VSP_023105" description="In isoform 3." evidence="8">
    <original>K</original>
    <variation>KKRKSSSSVQMM</variation>
    <location>
        <position position="328"/>
    </location>
</feature>
<feature type="splice variant" id="VSP_023106" description="In isoform 2, isoform 3 and isoform 4." evidence="8">
    <location>
        <begin position="329"/>
        <end position="362"/>
    </location>
</feature>
<feature type="splice variant" id="VSP_023107" description="In isoform 4 and isoform 6." evidence="8">
    <original>K</original>
    <variation>N</variation>
    <location>
        <position position="512"/>
    </location>
</feature>
<feature type="splice variant" id="VSP_023108" description="In isoform 4 and isoform 6." evidence="8">
    <location>
        <begin position="513"/>
        <end position="533"/>
    </location>
</feature>
<proteinExistence type="evidence at transcript level"/>
<sequence>MASTTTCTRFTDEYQLFEELGKGAFSVVRRCMKIPTGQEYAAKIINTKKLSARDHQKLEREARICRLLKHPNIVRLHDSISEEGFHYLVFDLVTGGELFEDIVAREYYSEADASHCIQQILESVNHCHLNGIVHRDLKPENLLLASKSKGAAVKLADFGLAIEVQGDQQAWFGFAGTPGYLSPEVLRKDPYGKPVDMWACGVILYILLVGYPPFWDEDQHRLYQQIKAGAYDFPSPEWDTVTPEAKDLINKMLTINPAKRITASEALKHPWISHRATVASMMHRQETVDCLKKFNARRKLKGAILTTMLATRNFSAAKSLLKKPDGVKINNKANVVTSPKENIPTPALEPQTTVIHNPDGNKESTESSNTTIEDEDVKARKQEIIKVTEQLIEAINNGDFEAYTKICDPGLTAFEPEALGNLVEGMDFHRFYFENALSKSNKPIHTIILNPHVHLVGEDAACIAYIRLTQYMDGSGMPKTMQSEETRVWHRRDGKWQNVHFHRSGSPTVPIKPPCIPNGKENYSGGTSLWQNI</sequence>
<name>KCC2D_RABIT</name>
<protein>
    <recommendedName>
        <fullName>Calcium/calmodulin-dependent protein kinase type II subunit delta</fullName>
        <shortName>CaM kinase II subunit delta</shortName>
        <shortName>CaMK-II subunit delta</shortName>
        <ecNumber>2.7.11.17</ecNumber>
    </recommendedName>
</protein>
<evidence type="ECO:0000250" key="1"/>
<evidence type="ECO:0000250" key="2">
    <source>
        <dbReference type="UniProtKB" id="Q13557"/>
    </source>
</evidence>
<evidence type="ECO:0000250" key="3">
    <source>
        <dbReference type="UniProtKB" id="Q6PHZ2"/>
    </source>
</evidence>
<evidence type="ECO:0000255" key="4">
    <source>
        <dbReference type="PROSITE-ProRule" id="PRU00159"/>
    </source>
</evidence>
<evidence type="ECO:0000255" key="5">
    <source>
        <dbReference type="PROSITE-ProRule" id="PRU10027"/>
    </source>
</evidence>
<evidence type="ECO:0000256" key="6">
    <source>
        <dbReference type="SAM" id="MobiDB-lite"/>
    </source>
</evidence>
<evidence type="ECO:0000269" key="7">
    <source>
    </source>
</evidence>
<evidence type="ECO:0000305" key="8"/>
<organism>
    <name type="scientific">Oryctolagus cuniculus</name>
    <name type="common">Rabbit</name>
    <dbReference type="NCBI Taxonomy" id="9986"/>
    <lineage>
        <taxon>Eukaryota</taxon>
        <taxon>Metazoa</taxon>
        <taxon>Chordata</taxon>
        <taxon>Craniata</taxon>
        <taxon>Vertebrata</taxon>
        <taxon>Euteleostomi</taxon>
        <taxon>Mammalia</taxon>
        <taxon>Eutheria</taxon>
        <taxon>Euarchontoglires</taxon>
        <taxon>Glires</taxon>
        <taxon>Lagomorpha</taxon>
        <taxon>Leporidae</taxon>
        <taxon>Oryctolagus</taxon>
    </lineage>
</organism>
<reference key="1">
    <citation type="journal article" date="1998" name="Gene">
        <title>New alternatively spliced variants of calmodulin-dependent protein kinase II from rabbit liver.</title>
        <authorList>
            <person name="Takeuchi M."/>
            <person name="Fujisawa H."/>
        </authorList>
    </citation>
    <scope>NUCLEOTIDE SEQUENCE [MRNA]</scope>
    <scope>ALTERNATIVE SPLICING</scope>
    <scope>TISSUE SPECIFICITY</scope>
    <source>
        <tissue>Liver</tissue>
    </source>
</reference>
<dbReference type="EC" id="2.7.11.17"/>
<dbReference type="EMBL" id="D14906">
    <property type="protein sequence ID" value="BAA28870.1"/>
    <property type="molecule type" value="mRNA"/>
</dbReference>
<dbReference type="RefSeq" id="NP_001093424.1">
    <molecule id="O77708-2"/>
    <property type="nucleotide sequence ID" value="NM_001099954.1"/>
</dbReference>
<dbReference type="SMR" id="O77708"/>
<dbReference type="FunCoup" id="O77708">
    <property type="interactions" value="396"/>
</dbReference>
<dbReference type="STRING" id="9986.ENSOCUP00000032333"/>
<dbReference type="PaxDb" id="9986-ENSOCUP00000021029"/>
<dbReference type="GeneID" id="100101557"/>
<dbReference type="KEGG" id="ocu:100101557"/>
<dbReference type="CTD" id="817"/>
<dbReference type="eggNOG" id="KOG0033">
    <property type="taxonomic scope" value="Eukaryota"/>
</dbReference>
<dbReference type="InParanoid" id="O77708"/>
<dbReference type="OrthoDB" id="336747at2759"/>
<dbReference type="BRENDA" id="2.7.11.17">
    <property type="organism ID" value="1749"/>
</dbReference>
<dbReference type="Proteomes" id="UP000001811">
    <property type="component" value="Unplaced"/>
</dbReference>
<dbReference type="GO" id="GO:0042383">
    <property type="term" value="C:sarcolemma"/>
    <property type="evidence" value="ECO:0007669"/>
    <property type="project" value="UniProtKB-SubCell"/>
</dbReference>
<dbReference type="GO" id="GO:0033017">
    <property type="term" value="C:sarcoplasmic reticulum membrane"/>
    <property type="evidence" value="ECO:0007669"/>
    <property type="project" value="UniProtKB-SubCell"/>
</dbReference>
<dbReference type="GO" id="GO:0005524">
    <property type="term" value="F:ATP binding"/>
    <property type="evidence" value="ECO:0007669"/>
    <property type="project" value="UniProtKB-KW"/>
</dbReference>
<dbReference type="GO" id="GO:0004683">
    <property type="term" value="F:calcium/calmodulin-dependent protein kinase activity"/>
    <property type="evidence" value="ECO:0007669"/>
    <property type="project" value="UniProtKB-EC"/>
</dbReference>
<dbReference type="GO" id="GO:0005516">
    <property type="term" value="F:calmodulin binding"/>
    <property type="evidence" value="ECO:0007669"/>
    <property type="project" value="UniProtKB-KW"/>
</dbReference>
<dbReference type="GO" id="GO:0106310">
    <property type="term" value="F:protein serine kinase activity"/>
    <property type="evidence" value="ECO:0007669"/>
    <property type="project" value="RHEA"/>
</dbReference>
<dbReference type="GO" id="GO:0010613">
    <property type="term" value="P:positive regulation of cardiac muscle hypertrophy"/>
    <property type="evidence" value="ECO:0000250"/>
    <property type="project" value="UniProtKB"/>
</dbReference>
<dbReference type="GO" id="GO:0006468">
    <property type="term" value="P:protein phosphorylation"/>
    <property type="evidence" value="ECO:0000250"/>
    <property type="project" value="UniProtKB"/>
</dbReference>
<dbReference type="GO" id="GO:0060341">
    <property type="term" value="P:regulation of cellular localization"/>
    <property type="evidence" value="ECO:0000250"/>
    <property type="project" value="UniProtKB"/>
</dbReference>
<dbReference type="CDD" id="cd14086">
    <property type="entry name" value="STKc_CaMKII"/>
    <property type="match status" value="1"/>
</dbReference>
<dbReference type="FunFam" id="1.10.510.10:FF:000001">
    <property type="entry name" value="Calcium/calmodulin-dependent protein kinase type II subunit delta"/>
    <property type="match status" value="1"/>
</dbReference>
<dbReference type="FunFam" id="3.30.200.20:FF:000002">
    <property type="entry name" value="Calcium/calmodulin-dependent protein kinase type II subunit delta isoform 2"/>
    <property type="match status" value="1"/>
</dbReference>
<dbReference type="FunFam" id="3.10.450.50:FF:000001">
    <property type="entry name" value="calcium/calmodulin-dependent protein kinase type II subunit gamma isoform X1"/>
    <property type="match status" value="1"/>
</dbReference>
<dbReference type="Gene3D" id="3.10.450.50">
    <property type="match status" value="1"/>
</dbReference>
<dbReference type="Gene3D" id="6.10.140.620">
    <property type="match status" value="1"/>
</dbReference>
<dbReference type="Gene3D" id="3.30.200.20">
    <property type="entry name" value="Phosphorylase Kinase, domain 1"/>
    <property type="match status" value="1"/>
</dbReference>
<dbReference type="Gene3D" id="1.10.510.10">
    <property type="entry name" value="Transferase(Phosphotransferase) domain 1"/>
    <property type="match status" value="1"/>
</dbReference>
<dbReference type="InterPro" id="IPR013543">
    <property type="entry name" value="Ca/CaM-dep_prot_kinase-assoc"/>
</dbReference>
<dbReference type="InterPro" id="IPR011009">
    <property type="entry name" value="Kinase-like_dom_sf"/>
</dbReference>
<dbReference type="InterPro" id="IPR032710">
    <property type="entry name" value="NTF2-like_dom_sf"/>
</dbReference>
<dbReference type="InterPro" id="IPR000719">
    <property type="entry name" value="Prot_kinase_dom"/>
</dbReference>
<dbReference type="InterPro" id="IPR017441">
    <property type="entry name" value="Protein_kinase_ATP_BS"/>
</dbReference>
<dbReference type="InterPro" id="IPR008271">
    <property type="entry name" value="Ser/Thr_kinase_AS"/>
</dbReference>
<dbReference type="PANTHER" id="PTHR24347">
    <property type="entry name" value="SERINE/THREONINE-PROTEIN KINASE"/>
    <property type="match status" value="1"/>
</dbReference>
<dbReference type="Pfam" id="PF08332">
    <property type="entry name" value="CaMKII_AD"/>
    <property type="match status" value="1"/>
</dbReference>
<dbReference type="Pfam" id="PF00069">
    <property type="entry name" value="Pkinase"/>
    <property type="match status" value="1"/>
</dbReference>
<dbReference type="SMART" id="SM00220">
    <property type="entry name" value="S_TKc"/>
    <property type="match status" value="1"/>
</dbReference>
<dbReference type="SUPFAM" id="SSF54427">
    <property type="entry name" value="NTF2-like"/>
    <property type="match status" value="1"/>
</dbReference>
<dbReference type="SUPFAM" id="SSF56112">
    <property type="entry name" value="Protein kinase-like (PK-like)"/>
    <property type="match status" value="1"/>
</dbReference>
<dbReference type="PROSITE" id="PS00107">
    <property type="entry name" value="PROTEIN_KINASE_ATP"/>
    <property type="match status" value="1"/>
</dbReference>
<dbReference type="PROSITE" id="PS50011">
    <property type="entry name" value="PROTEIN_KINASE_DOM"/>
    <property type="match status" value="1"/>
</dbReference>
<dbReference type="PROSITE" id="PS00108">
    <property type="entry name" value="PROTEIN_KINASE_ST"/>
    <property type="match status" value="1"/>
</dbReference>
<comment type="function">
    <text evidence="2 3">Calcium/calmodulin-dependent protein kinase involved in the regulation of Ca(2+) homeostatis and excitation-contraction coupling (ECC) in heart by targeting ion channels, transporters and accessory proteins involved in Ca(2+) influx into the myocyte, Ca(2+) release from the sarcoplasmic reticulum (SR), SR Ca(2+) uptake and Na(+) and K(+) channel transport. Targets also transcription factors and signaling molecules to regulate heart function. In its activated form, is involved in the pathogenesis of dilated cardiomyopathy and heart failure. Contributes to cardiac decompensation and heart failure by regulating SR Ca(2+) release via direct phosphorylation of RYR2 Ca(2+) channel on 'Ser-2808'. In the nucleus, phosphorylates the MEF2 repressor HDAC4, promoting its nuclear export and binding to 14-3-3 protein, and expression of MEF2 and genes involved in the hypertrophic program. Is essential for left ventricular remodeling responses to myocardial infarction. In pathological myocardial remodeling acts downstream of the beta adrenergic receptor signaling cascade to regulate key proteins involved in ECC. Regulates Ca(2+) influx to myocytes by binding and phosphorylating the L-type Ca(2+) channel subunit beta-2 CACNB2. In addition to Ca(2+) channels, can target and regulate the cardiac sarcolemmal Na(+) channel Nav1.5/SCN5A and the K+ channel Kv4.3/KCND3, which contribute to arrhythmogenesis in heart failure. Phosphorylates phospholamban (PLN/PLB), an endogenous inhibitor of SERCA2A/ATP2A2, contributing to the enhancement of SR Ca(2+) uptake that may be important in frequency-dependent acceleration of relaxation (FDAR) and maintenance of contractile function during acidosis. May participate in the modulation of skeletal muscle function in response to exercise, by regulating SR Ca(2+) transport through phosphorylation of PLN/PLB and triadin, a ryanodine receptor-coupling factor. In response to interferon-gamma (IFN-gamma) stimulation, catalyzes phosphorylation of STAT1, stimulating the JAK-STAT signaling pathway (By similarity).</text>
</comment>
<comment type="catalytic activity">
    <reaction>
        <text>L-seryl-[protein] + ATP = O-phospho-L-seryl-[protein] + ADP + H(+)</text>
        <dbReference type="Rhea" id="RHEA:17989"/>
        <dbReference type="Rhea" id="RHEA-COMP:9863"/>
        <dbReference type="Rhea" id="RHEA-COMP:11604"/>
        <dbReference type="ChEBI" id="CHEBI:15378"/>
        <dbReference type="ChEBI" id="CHEBI:29999"/>
        <dbReference type="ChEBI" id="CHEBI:30616"/>
        <dbReference type="ChEBI" id="CHEBI:83421"/>
        <dbReference type="ChEBI" id="CHEBI:456216"/>
        <dbReference type="EC" id="2.7.11.17"/>
    </reaction>
</comment>
<comment type="catalytic activity">
    <reaction>
        <text>L-threonyl-[protein] + ATP = O-phospho-L-threonyl-[protein] + ADP + H(+)</text>
        <dbReference type="Rhea" id="RHEA:46608"/>
        <dbReference type="Rhea" id="RHEA-COMP:11060"/>
        <dbReference type="Rhea" id="RHEA-COMP:11605"/>
        <dbReference type="ChEBI" id="CHEBI:15378"/>
        <dbReference type="ChEBI" id="CHEBI:30013"/>
        <dbReference type="ChEBI" id="CHEBI:30616"/>
        <dbReference type="ChEBI" id="CHEBI:61977"/>
        <dbReference type="ChEBI" id="CHEBI:456216"/>
        <dbReference type="EC" id="2.7.11.17"/>
    </reaction>
</comment>
<comment type="activity regulation">
    <text>Activated by Ca(2+)/calmodulin. Binding of calmodulin results in conformational change that relieves intrasteric autoinhibition and allows autophosphorylation of Thr-287 which turns the kinase in a constitutively active form and confers to the kinase a Ca(2+)-independent activity.</text>
</comment>
<comment type="subunit">
    <text evidence="1">CAMK2 is composed of 4 different chains: alpha (CAMK2A), beta (CAMK2B), gamma (CAMK2G), and delta (CAMK2D). The different isoforms assemble into homo- or heteromultimeric holoenzymes composed of 12 subunits with two hexameric rings stacked one on top of the other. Interacts with RRAD and CACNB2 (By similarity).</text>
</comment>
<comment type="subcellular location">
    <subcellularLocation>
        <location evidence="8">Cell membrane</location>
        <location evidence="8">Sarcolemma</location>
        <topology evidence="8">Peripheral membrane protein</topology>
        <orientation evidence="8">Cytoplasmic side</orientation>
    </subcellularLocation>
    <subcellularLocation>
        <location evidence="8">Sarcoplasmic reticulum membrane</location>
        <topology evidence="8">Peripheral membrane protein</topology>
        <orientation evidence="8">Cytoplasmic side</orientation>
    </subcellularLocation>
</comment>
<comment type="alternative products">
    <event type="alternative splicing"/>
    <isoform>
        <id>O77708-1</id>
        <name>1</name>
        <name>Delta 1</name>
        <sequence type="displayed"/>
    </isoform>
    <isoform>
        <id>O77708-2</id>
        <name>2</name>
        <name>Delta 2</name>
        <sequence type="described" ref="VSP_023106"/>
    </isoform>
    <isoform>
        <id>O77708-3</id>
        <name>3</name>
        <name>Delta 3</name>
        <sequence type="described" ref="VSP_023105 VSP_023106"/>
    </isoform>
    <isoform>
        <id>O77708-4</id>
        <name>4</name>
        <name>Delta 6</name>
        <sequence type="described" ref="VSP_023106 VSP_023107 VSP_023108"/>
    </isoform>
    <isoform>
        <id>O77708-5</id>
        <name>5</name>
        <name>Delta 11</name>
        <sequence type="described" ref="VSP_023104"/>
    </isoform>
    <isoform>
        <id>O77708-6</id>
        <name>6</name>
        <name>Delta 12</name>
        <sequence type="described" ref="VSP_023104 VSP_023107 VSP_023108"/>
    </isoform>
</comment>
<comment type="tissue specificity">
    <text evidence="7">Expressed in liver.</text>
</comment>
<comment type="domain">
    <text>The CAMK2 protein kinases contain a unique C-terminal subunit association domain responsible for oligomerization.</text>
</comment>
<comment type="PTM">
    <text evidence="1">Autophosphorylation of Thr-287 following activation by Ca(2+)/calmodulin. Phosphorylation of Thr-287 locks the kinase into an activated state (By similarity).</text>
</comment>
<comment type="similarity">
    <text evidence="8">Belongs to the protein kinase superfamily. CAMK Ser/Thr protein kinase family. CaMK subfamily.</text>
</comment>
<accession>O77708</accession>